<feature type="chain" id="PRO_0000388347" description="Uncharacterized protein YlbN">
    <location>
        <begin position="1"/>
        <end position="172"/>
    </location>
</feature>
<feature type="region of interest" description="Disordered" evidence="1">
    <location>
        <begin position="130"/>
        <end position="154"/>
    </location>
</feature>
<organism>
    <name type="scientific">Bacillus subtilis (strain 168)</name>
    <dbReference type="NCBI Taxonomy" id="224308"/>
    <lineage>
        <taxon>Bacteria</taxon>
        <taxon>Bacillati</taxon>
        <taxon>Bacillota</taxon>
        <taxon>Bacilli</taxon>
        <taxon>Bacillales</taxon>
        <taxon>Bacillaceae</taxon>
        <taxon>Bacillus</taxon>
    </lineage>
</organism>
<name>YLBN_BACSU</name>
<sequence length="172" mass="19994">MKWTIYQLHQMPKQSFEFDETVELNELTKLNSDIRRISPVRVKGRADIKSKQVSFDFTISGEMLLPCSRTLVDVPYPFEISTKELFIFHHTDDIEDDDVHIVEDDTIDITPIVKEEILLEIPMQIFCESEQEKGAAPQEGKDWQVISEEDKKNQVDPRLAALEKLLKQDDES</sequence>
<proteinExistence type="predicted"/>
<keyword id="KW-1185">Reference proteome</keyword>
<accession>O34445</accession>
<accession>Q797S8</accession>
<protein>
    <recommendedName>
        <fullName>Uncharacterized protein YlbN</fullName>
    </recommendedName>
</protein>
<evidence type="ECO:0000256" key="1">
    <source>
        <dbReference type="SAM" id="MobiDB-lite"/>
    </source>
</evidence>
<reference key="1">
    <citation type="submission" date="1997-08" db="EMBL/GenBank/DDBJ databases">
        <title>Bacillus subtilis chromosomal region downstream nprE.</title>
        <authorList>
            <person name="Bertero M."/>
            <person name="Presecan E."/>
            <person name="Glaser P."/>
            <person name="Richou A."/>
            <person name="Danchin A."/>
        </authorList>
    </citation>
    <scope>NUCLEOTIDE SEQUENCE [GENOMIC DNA]</scope>
    <source>
        <strain>168</strain>
    </source>
</reference>
<reference key="2">
    <citation type="journal article" date="1997" name="Nature">
        <title>The complete genome sequence of the Gram-positive bacterium Bacillus subtilis.</title>
        <authorList>
            <person name="Kunst F."/>
            <person name="Ogasawara N."/>
            <person name="Moszer I."/>
            <person name="Albertini A.M."/>
            <person name="Alloni G."/>
            <person name="Azevedo V."/>
            <person name="Bertero M.G."/>
            <person name="Bessieres P."/>
            <person name="Bolotin A."/>
            <person name="Borchert S."/>
            <person name="Borriss R."/>
            <person name="Boursier L."/>
            <person name="Brans A."/>
            <person name="Braun M."/>
            <person name="Brignell S.C."/>
            <person name="Bron S."/>
            <person name="Brouillet S."/>
            <person name="Bruschi C.V."/>
            <person name="Caldwell B."/>
            <person name="Capuano V."/>
            <person name="Carter N.M."/>
            <person name="Choi S.-K."/>
            <person name="Codani J.-J."/>
            <person name="Connerton I.F."/>
            <person name="Cummings N.J."/>
            <person name="Daniel R.A."/>
            <person name="Denizot F."/>
            <person name="Devine K.M."/>
            <person name="Duesterhoeft A."/>
            <person name="Ehrlich S.D."/>
            <person name="Emmerson P.T."/>
            <person name="Entian K.-D."/>
            <person name="Errington J."/>
            <person name="Fabret C."/>
            <person name="Ferrari E."/>
            <person name="Foulger D."/>
            <person name="Fritz C."/>
            <person name="Fujita M."/>
            <person name="Fujita Y."/>
            <person name="Fuma S."/>
            <person name="Galizzi A."/>
            <person name="Galleron N."/>
            <person name="Ghim S.-Y."/>
            <person name="Glaser P."/>
            <person name="Goffeau A."/>
            <person name="Golightly E.J."/>
            <person name="Grandi G."/>
            <person name="Guiseppi G."/>
            <person name="Guy B.J."/>
            <person name="Haga K."/>
            <person name="Haiech J."/>
            <person name="Harwood C.R."/>
            <person name="Henaut A."/>
            <person name="Hilbert H."/>
            <person name="Holsappel S."/>
            <person name="Hosono S."/>
            <person name="Hullo M.-F."/>
            <person name="Itaya M."/>
            <person name="Jones L.-M."/>
            <person name="Joris B."/>
            <person name="Karamata D."/>
            <person name="Kasahara Y."/>
            <person name="Klaerr-Blanchard M."/>
            <person name="Klein C."/>
            <person name="Kobayashi Y."/>
            <person name="Koetter P."/>
            <person name="Koningstein G."/>
            <person name="Krogh S."/>
            <person name="Kumano M."/>
            <person name="Kurita K."/>
            <person name="Lapidus A."/>
            <person name="Lardinois S."/>
            <person name="Lauber J."/>
            <person name="Lazarevic V."/>
            <person name="Lee S.-M."/>
            <person name="Levine A."/>
            <person name="Liu H."/>
            <person name="Masuda S."/>
            <person name="Mauel C."/>
            <person name="Medigue C."/>
            <person name="Medina N."/>
            <person name="Mellado R.P."/>
            <person name="Mizuno M."/>
            <person name="Moestl D."/>
            <person name="Nakai S."/>
            <person name="Noback M."/>
            <person name="Noone D."/>
            <person name="O'Reilly M."/>
            <person name="Ogawa K."/>
            <person name="Ogiwara A."/>
            <person name="Oudega B."/>
            <person name="Park S.-H."/>
            <person name="Parro V."/>
            <person name="Pohl T.M."/>
            <person name="Portetelle D."/>
            <person name="Porwollik S."/>
            <person name="Prescott A.M."/>
            <person name="Presecan E."/>
            <person name="Pujic P."/>
            <person name="Purnelle B."/>
            <person name="Rapoport G."/>
            <person name="Rey M."/>
            <person name="Reynolds S."/>
            <person name="Rieger M."/>
            <person name="Rivolta C."/>
            <person name="Rocha E."/>
            <person name="Roche B."/>
            <person name="Rose M."/>
            <person name="Sadaie Y."/>
            <person name="Sato T."/>
            <person name="Scanlan E."/>
            <person name="Schleich S."/>
            <person name="Schroeter R."/>
            <person name="Scoffone F."/>
            <person name="Sekiguchi J."/>
            <person name="Sekowska A."/>
            <person name="Seror S.J."/>
            <person name="Serror P."/>
            <person name="Shin B.-S."/>
            <person name="Soldo B."/>
            <person name="Sorokin A."/>
            <person name="Tacconi E."/>
            <person name="Takagi T."/>
            <person name="Takahashi H."/>
            <person name="Takemaru K."/>
            <person name="Takeuchi M."/>
            <person name="Tamakoshi A."/>
            <person name="Tanaka T."/>
            <person name="Terpstra P."/>
            <person name="Tognoni A."/>
            <person name="Tosato V."/>
            <person name="Uchiyama S."/>
            <person name="Vandenbol M."/>
            <person name="Vannier F."/>
            <person name="Vassarotti A."/>
            <person name="Viari A."/>
            <person name="Wambutt R."/>
            <person name="Wedler E."/>
            <person name="Wedler H."/>
            <person name="Weitzenegger T."/>
            <person name="Winters P."/>
            <person name="Wipat A."/>
            <person name="Yamamoto H."/>
            <person name="Yamane K."/>
            <person name="Yasumoto K."/>
            <person name="Yata K."/>
            <person name="Yoshida K."/>
            <person name="Yoshikawa H.-F."/>
            <person name="Zumstein E."/>
            <person name="Yoshikawa H."/>
            <person name="Danchin A."/>
        </authorList>
    </citation>
    <scope>NUCLEOTIDE SEQUENCE [LARGE SCALE GENOMIC DNA]</scope>
    <source>
        <strain>168</strain>
    </source>
</reference>
<dbReference type="EMBL" id="Z98682">
    <property type="protein sequence ID" value="CAB11360.1"/>
    <property type="molecule type" value="Genomic_DNA"/>
</dbReference>
<dbReference type="EMBL" id="AL009126">
    <property type="protein sequence ID" value="CAB13380.1"/>
    <property type="molecule type" value="Genomic_DNA"/>
</dbReference>
<dbReference type="PIR" id="C69875">
    <property type="entry name" value="C69875"/>
</dbReference>
<dbReference type="RefSeq" id="NP_389390.1">
    <property type="nucleotide sequence ID" value="NC_000964.3"/>
</dbReference>
<dbReference type="RefSeq" id="WP_003232214.1">
    <property type="nucleotide sequence ID" value="NZ_OZ025638.1"/>
</dbReference>
<dbReference type="FunCoup" id="O34445">
    <property type="interactions" value="91"/>
</dbReference>
<dbReference type="STRING" id="224308.BSU15070"/>
<dbReference type="PaxDb" id="224308-BSU15070"/>
<dbReference type="DNASU" id="936788"/>
<dbReference type="EnsemblBacteria" id="CAB13380">
    <property type="protein sequence ID" value="CAB13380"/>
    <property type="gene ID" value="BSU_15070"/>
</dbReference>
<dbReference type="GeneID" id="936788"/>
<dbReference type="KEGG" id="bsu:BSU15070"/>
<dbReference type="PATRIC" id="fig|224308.179.peg.1643"/>
<dbReference type="eggNOG" id="COG1399">
    <property type="taxonomic scope" value="Bacteria"/>
</dbReference>
<dbReference type="InParanoid" id="O34445"/>
<dbReference type="OrthoDB" id="9790372at2"/>
<dbReference type="PhylomeDB" id="O34445"/>
<dbReference type="BioCyc" id="BSUB:BSU15070-MONOMER"/>
<dbReference type="Proteomes" id="UP000001570">
    <property type="component" value="Chromosome"/>
</dbReference>
<dbReference type="InterPro" id="IPR003772">
    <property type="entry name" value="YceD"/>
</dbReference>
<dbReference type="Pfam" id="PF02620">
    <property type="entry name" value="YceD"/>
    <property type="match status" value="1"/>
</dbReference>
<gene>
    <name type="primary">ylbN</name>
    <name type="ordered locus">BSU15070</name>
</gene>